<dbReference type="EMBL" id="AJ132624">
    <property type="protein sequence ID" value="CAB89869.1"/>
    <property type="molecule type" value="Genomic_DNA"/>
</dbReference>
<dbReference type="EMBL" id="AM406671">
    <property type="protein sequence ID" value="CAL97485.1"/>
    <property type="molecule type" value="Genomic_DNA"/>
</dbReference>
<dbReference type="RefSeq" id="WP_011676642.1">
    <property type="nucleotide sequence ID" value="NC_009004.1"/>
</dbReference>
<dbReference type="SMR" id="Q9L4N8"/>
<dbReference type="STRING" id="416870.llmg_0890"/>
<dbReference type="GeneID" id="61109848"/>
<dbReference type="KEGG" id="llm:llmg_0890"/>
<dbReference type="eggNOG" id="COG2065">
    <property type="taxonomic scope" value="Bacteria"/>
</dbReference>
<dbReference type="HOGENOM" id="CLU_094234_2_1_9"/>
<dbReference type="OrthoDB" id="9802227at2"/>
<dbReference type="PhylomeDB" id="Q9L4N8"/>
<dbReference type="Proteomes" id="UP000000364">
    <property type="component" value="Chromosome"/>
</dbReference>
<dbReference type="GO" id="GO:0003723">
    <property type="term" value="F:RNA binding"/>
    <property type="evidence" value="ECO:0007669"/>
    <property type="project" value="UniProtKB-UniRule"/>
</dbReference>
<dbReference type="GO" id="GO:0004845">
    <property type="term" value="F:uracil phosphoribosyltransferase activity"/>
    <property type="evidence" value="ECO:0007669"/>
    <property type="project" value="UniProtKB-UniRule"/>
</dbReference>
<dbReference type="GO" id="GO:0006353">
    <property type="term" value="P:DNA-templated transcription termination"/>
    <property type="evidence" value="ECO:0007669"/>
    <property type="project" value="UniProtKB-UniRule"/>
</dbReference>
<dbReference type="CDD" id="cd06223">
    <property type="entry name" value="PRTases_typeI"/>
    <property type="match status" value="1"/>
</dbReference>
<dbReference type="FunFam" id="3.40.50.2020:FF:000020">
    <property type="entry name" value="Bifunctional protein PyrR"/>
    <property type="match status" value="1"/>
</dbReference>
<dbReference type="Gene3D" id="3.40.50.2020">
    <property type="match status" value="1"/>
</dbReference>
<dbReference type="HAMAP" id="MF_01219">
    <property type="entry name" value="PyrR"/>
    <property type="match status" value="1"/>
</dbReference>
<dbReference type="InterPro" id="IPR000836">
    <property type="entry name" value="PRibTrfase_dom"/>
</dbReference>
<dbReference type="InterPro" id="IPR029057">
    <property type="entry name" value="PRTase-like"/>
</dbReference>
<dbReference type="InterPro" id="IPR023050">
    <property type="entry name" value="PyrR"/>
</dbReference>
<dbReference type="InterPro" id="IPR050137">
    <property type="entry name" value="PyrR_bifunctional"/>
</dbReference>
<dbReference type="NCBIfam" id="NF003548">
    <property type="entry name" value="PRK05205.1-4"/>
    <property type="match status" value="1"/>
</dbReference>
<dbReference type="NCBIfam" id="NF003549">
    <property type="entry name" value="PRK05205.1-5"/>
    <property type="match status" value="1"/>
</dbReference>
<dbReference type="PANTHER" id="PTHR11608">
    <property type="entry name" value="BIFUNCTIONAL PROTEIN PYRR"/>
    <property type="match status" value="1"/>
</dbReference>
<dbReference type="PANTHER" id="PTHR11608:SF0">
    <property type="entry name" value="BIFUNCTIONAL PROTEIN PYRR"/>
    <property type="match status" value="1"/>
</dbReference>
<dbReference type="Pfam" id="PF00156">
    <property type="entry name" value="Pribosyltran"/>
    <property type="match status" value="1"/>
</dbReference>
<dbReference type="SUPFAM" id="SSF53271">
    <property type="entry name" value="PRTase-like"/>
    <property type="match status" value="1"/>
</dbReference>
<comment type="function">
    <text>Regulates transcriptional attenuation of the pyrimidine nucleotide (pyr) operon in response to exogenous pyrimidines, probably by binding to specific sites on pyr mRNA. This probably disrupts an antiterminator hairpin in the RNA and favors formation of a downstream transcription terminator, leading to a reduced expression of downstream genes.</text>
</comment>
<comment type="similarity">
    <text evidence="2">Belongs to the purine/pyrimidine phosphoribosyltransferase family. PyrR subfamily.</text>
</comment>
<comment type="caution">
    <text evidence="2">Unlike for B.subtilis, the PyrR protein of L.lactis was shown not to encode UPRTase activity.</text>
</comment>
<sequence>MARKEIIDEITMKRAITRITYEIIERNKELDKLVLIGIKTRGVYLAKRIQERLQQLEGLEIPFGELDTRPFRDDKQAQEDTTEIDIDITGKDVILVDDVLYTGRTIRAAIDGIVKLGRPARVQLAVLVDRGHRELPIRADYVGKNIPTGHDEEIIVQMSEHDGNDSILIKRED</sequence>
<keyword id="KW-0694">RNA-binding</keyword>
<keyword id="KW-0804">Transcription</keyword>
<keyword id="KW-0805">Transcription regulation</keyword>
<keyword id="KW-0806">Transcription termination</keyword>
<name>PYRR_LACLM</name>
<gene>
    <name type="primary">pyrR</name>
    <name type="ordered locus">llmg_0890</name>
</gene>
<feature type="chain" id="PRO_0000183040" description="Pyrimidine operon regulatory protein">
    <location>
        <begin position="1"/>
        <end position="173"/>
    </location>
</feature>
<feature type="short sequence motif" description="PRPP-binding" evidence="1">
    <location>
        <begin position="93"/>
        <end position="105"/>
    </location>
</feature>
<feature type="binding site" evidence="1">
    <location>
        <begin position="40"/>
        <end position="41"/>
    </location>
    <ligand>
        <name>substrate</name>
    </ligand>
</feature>
<feature type="binding site" evidence="1">
    <location>
        <begin position="97"/>
        <end position="105"/>
    </location>
    <ligand>
        <name>substrate</name>
    </ligand>
</feature>
<feature type="binding site" evidence="1">
    <location>
        <position position="130"/>
    </location>
    <ligand>
        <name>substrate</name>
    </ligand>
</feature>
<accession>Q9L4N8</accession>
<accession>A2RJN2</accession>
<proteinExistence type="inferred from homology"/>
<reference key="1">
    <citation type="journal article" date="2001" name="J. Bacteriol.">
        <title>The pyrimidine operon pyrRPB-carA from Lactococcus lactis.</title>
        <authorList>
            <person name="Martinussen J."/>
            <person name="Schallert J."/>
            <person name="Andersen B."/>
            <person name="Hammer K."/>
        </authorList>
    </citation>
    <scope>NUCLEOTIDE SEQUENCE [GENOMIC DNA]</scope>
</reference>
<reference key="2">
    <citation type="journal article" date="2007" name="J. Bacteriol.">
        <title>The complete genome sequence of the lactic acid bacterial paradigm Lactococcus lactis subsp. cremoris MG1363.</title>
        <authorList>
            <person name="Wegmann U."/>
            <person name="O'Connell-Motherway M."/>
            <person name="Zomer A."/>
            <person name="Buist G."/>
            <person name="Shearman C."/>
            <person name="Canchaya C."/>
            <person name="Ventura M."/>
            <person name="Goesmann A."/>
            <person name="Gasson M.J."/>
            <person name="Kuipers O.P."/>
            <person name="van Sinderen D."/>
            <person name="Kok J."/>
        </authorList>
    </citation>
    <scope>NUCLEOTIDE SEQUENCE [LARGE SCALE GENOMIC DNA]</scope>
    <source>
        <strain>MG1363</strain>
    </source>
</reference>
<evidence type="ECO:0000250" key="1"/>
<evidence type="ECO:0000305" key="2"/>
<protein>
    <recommendedName>
        <fullName>Pyrimidine operon regulatory protein</fullName>
    </recommendedName>
</protein>
<organism>
    <name type="scientific">Lactococcus lactis subsp. cremoris (strain MG1363)</name>
    <dbReference type="NCBI Taxonomy" id="416870"/>
    <lineage>
        <taxon>Bacteria</taxon>
        <taxon>Bacillati</taxon>
        <taxon>Bacillota</taxon>
        <taxon>Bacilli</taxon>
        <taxon>Lactobacillales</taxon>
        <taxon>Streptococcaceae</taxon>
        <taxon>Lactococcus</taxon>
        <taxon>Lactococcus cremoris subsp. cremoris</taxon>
    </lineage>
</organism>